<accession>A8FLH8</accession>
<proteinExistence type="inferred from homology"/>
<comment type="catalytic activity">
    <reaction evidence="1">
        <text>tRNA(His) + L-histidine + ATP = L-histidyl-tRNA(His) + AMP + diphosphate + H(+)</text>
        <dbReference type="Rhea" id="RHEA:17313"/>
        <dbReference type="Rhea" id="RHEA-COMP:9665"/>
        <dbReference type="Rhea" id="RHEA-COMP:9689"/>
        <dbReference type="ChEBI" id="CHEBI:15378"/>
        <dbReference type="ChEBI" id="CHEBI:30616"/>
        <dbReference type="ChEBI" id="CHEBI:33019"/>
        <dbReference type="ChEBI" id="CHEBI:57595"/>
        <dbReference type="ChEBI" id="CHEBI:78442"/>
        <dbReference type="ChEBI" id="CHEBI:78527"/>
        <dbReference type="ChEBI" id="CHEBI:456215"/>
        <dbReference type="EC" id="6.1.1.21"/>
    </reaction>
</comment>
<comment type="subunit">
    <text evidence="1">Homodimer.</text>
</comment>
<comment type="subcellular location">
    <subcellularLocation>
        <location evidence="1">Cytoplasm</location>
    </subcellularLocation>
</comment>
<comment type="similarity">
    <text evidence="1">Belongs to the class-II aminoacyl-tRNA synthetase family.</text>
</comment>
<keyword id="KW-0030">Aminoacyl-tRNA synthetase</keyword>
<keyword id="KW-0067">ATP-binding</keyword>
<keyword id="KW-0963">Cytoplasm</keyword>
<keyword id="KW-0436">Ligase</keyword>
<keyword id="KW-0547">Nucleotide-binding</keyword>
<keyword id="KW-0648">Protein biosynthesis</keyword>
<evidence type="ECO:0000255" key="1">
    <source>
        <dbReference type="HAMAP-Rule" id="MF_00127"/>
    </source>
</evidence>
<feature type="chain" id="PRO_1000071401" description="Histidine--tRNA ligase">
    <location>
        <begin position="1"/>
        <end position="408"/>
    </location>
</feature>
<sequence length="408" mass="47055">MINALKGMKDLLDKDAYYYEKVIKTCEEVAKNYGFTFINTPHLELCTLFKRSVGESSDIVGKEMYEFIDKGENHVCMRPEGTAGVVRAYIEKKLDKNTSVKRWFYHGSMFRYERPQKGRLREFHQFGVESFGNASVYEDASIILMLVEIFSRLDIKFKLLINSLGCLKCMPKYRENLIHFLDSKEGFCEDCLRRKNLNPIRVLDCKNEHCQSLLNDAPLLNQNLCSSCQKDFEILQSVLKENGVDFEVDSKLVRGLDYYSKTAFEFISDEIGAKAAIAGGGRYDRLIEYLDGKSGFGVGFAMGIERIIAILEQKEEKVQREGIYLCAMDEIYIQKLLHIATNLRKEHKVLLSYEARKLAKHLENADKNNAEIFLCMGENEAQNESLFYKNLVKKEEKMIKISDLKKVL</sequence>
<dbReference type="EC" id="6.1.1.21" evidence="1"/>
<dbReference type="EMBL" id="CP000814">
    <property type="protein sequence ID" value="ABV52315.1"/>
    <property type="molecule type" value="Genomic_DNA"/>
</dbReference>
<dbReference type="RefSeq" id="WP_002866898.1">
    <property type="nucleotide sequence ID" value="NC_009839.1"/>
</dbReference>
<dbReference type="SMR" id="A8FLH8"/>
<dbReference type="KEGG" id="cju:C8J_0716"/>
<dbReference type="HOGENOM" id="CLU_025113_1_1_7"/>
<dbReference type="GO" id="GO:0005737">
    <property type="term" value="C:cytoplasm"/>
    <property type="evidence" value="ECO:0007669"/>
    <property type="project" value="UniProtKB-SubCell"/>
</dbReference>
<dbReference type="GO" id="GO:0005524">
    <property type="term" value="F:ATP binding"/>
    <property type="evidence" value="ECO:0007669"/>
    <property type="project" value="UniProtKB-UniRule"/>
</dbReference>
<dbReference type="GO" id="GO:0004821">
    <property type="term" value="F:histidine-tRNA ligase activity"/>
    <property type="evidence" value="ECO:0007669"/>
    <property type="project" value="UniProtKB-UniRule"/>
</dbReference>
<dbReference type="GO" id="GO:0006427">
    <property type="term" value="P:histidyl-tRNA aminoacylation"/>
    <property type="evidence" value="ECO:0007669"/>
    <property type="project" value="UniProtKB-UniRule"/>
</dbReference>
<dbReference type="CDD" id="cd00773">
    <property type="entry name" value="HisRS-like_core"/>
    <property type="match status" value="1"/>
</dbReference>
<dbReference type="Gene3D" id="3.40.50.800">
    <property type="entry name" value="Anticodon-binding domain"/>
    <property type="match status" value="1"/>
</dbReference>
<dbReference type="Gene3D" id="3.30.930.10">
    <property type="entry name" value="Bira Bifunctional Protein, Domain 2"/>
    <property type="match status" value="1"/>
</dbReference>
<dbReference type="HAMAP" id="MF_00127">
    <property type="entry name" value="His_tRNA_synth"/>
    <property type="match status" value="1"/>
</dbReference>
<dbReference type="InterPro" id="IPR006195">
    <property type="entry name" value="aa-tRNA-synth_II"/>
</dbReference>
<dbReference type="InterPro" id="IPR045864">
    <property type="entry name" value="aa-tRNA-synth_II/BPL/LPL"/>
</dbReference>
<dbReference type="InterPro" id="IPR004154">
    <property type="entry name" value="Anticodon-bd"/>
</dbReference>
<dbReference type="InterPro" id="IPR036621">
    <property type="entry name" value="Anticodon-bd_dom_sf"/>
</dbReference>
<dbReference type="InterPro" id="IPR015807">
    <property type="entry name" value="His-tRNA-ligase"/>
</dbReference>
<dbReference type="InterPro" id="IPR041715">
    <property type="entry name" value="HisRS-like_core"/>
</dbReference>
<dbReference type="InterPro" id="IPR004516">
    <property type="entry name" value="HisRS/HisZ"/>
</dbReference>
<dbReference type="NCBIfam" id="TIGR00442">
    <property type="entry name" value="hisS"/>
    <property type="match status" value="1"/>
</dbReference>
<dbReference type="PANTHER" id="PTHR43707:SF1">
    <property type="entry name" value="HISTIDINE--TRNA LIGASE, MITOCHONDRIAL-RELATED"/>
    <property type="match status" value="1"/>
</dbReference>
<dbReference type="PANTHER" id="PTHR43707">
    <property type="entry name" value="HISTIDYL-TRNA SYNTHETASE"/>
    <property type="match status" value="1"/>
</dbReference>
<dbReference type="Pfam" id="PF03129">
    <property type="entry name" value="HGTP_anticodon"/>
    <property type="match status" value="1"/>
</dbReference>
<dbReference type="Pfam" id="PF13393">
    <property type="entry name" value="tRNA-synt_His"/>
    <property type="match status" value="1"/>
</dbReference>
<dbReference type="PIRSF" id="PIRSF001549">
    <property type="entry name" value="His-tRNA_synth"/>
    <property type="match status" value="1"/>
</dbReference>
<dbReference type="SUPFAM" id="SSF52954">
    <property type="entry name" value="Class II aaRS ABD-related"/>
    <property type="match status" value="1"/>
</dbReference>
<dbReference type="SUPFAM" id="SSF55681">
    <property type="entry name" value="Class II aaRS and biotin synthetases"/>
    <property type="match status" value="1"/>
</dbReference>
<dbReference type="PROSITE" id="PS50862">
    <property type="entry name" value="AA_TRNA_LIGASE_II"/>
    <property type="match status" value="1"/>
</dbReference>
<gene>
    <name evidence="1" type="primary">hisS</name>
    <name type="ordered locus">C8J_0716</name>
</gene>
<protein>
    <recommendedName>
        <fullName evidence="1">Histidine--tRNA ligase</fullName>
        <ecNumber evidence="1">6.1.1.21</ecNumber>
    </recommendedName>
    <alternativeName>
        <fullName evidence="1">Histidyl-tRNA synthetase</fullName>
        <shortName evidence="1">HisRS</shortName>
    </alternativeName>
</protein>
<organism>
    <name type="scientific">Campylobacter jejuni subsp. jejuni serotype O:6 (strain 81116 / NCTC 11828)</name>
    <dbReference type="NCBI Taxonomy" id="407148"/>
    <lineage>
        <taxon>Bacteria</taxon>
        <taxon>Pseudomonadati</taxon>
        <taxon>Campylobacterota</taxon>
        <taxon>Epsilonproteobacteria</taxon>
        <taxon>Campylobacterales</taxon>
        <taxon>Campylobacteraceae</taxon>
        <taxon>Campylobacter</taxon>
    </lineage>
</organism>
<reference key="1">
    <citation type="journal article" date="2007" name="J. Bacteriol.">
        <title>The complete genome sequence of Campylobacter jejuni strain 81116 (NCTC11828).</title>
        <authorList>
            <person name="Pearson B.M."/>
            <person name="Gaskin D.J.H."/>
            <person name="Segers R.P.A.M."/>
            <person name="Wells J.M."/>
            <person name="Nuijten P.J.M."/>
            <person name="van Vliet A.H.M."/>
        </authorList>
    </citation>
    <scope>NUCLEOTIDE SEQUENCE [LARGE SCALE GENOMIC DNA]</scope>
    <source>
        <strain>81116 / NCTC 11828</strain>
    </source>
</reference>
<name>SYH_CAMJ8</name>